<evidence type="ECO:0000255" key="1">
    <source>
        <dbReference type="HAMAP-Rule" id="MF_01007"/>
    </source>
</evidence>
<evidence type="ECO:0000256" key="2">
    <source>
        <dbReference type="SAM" id="MobiDB-lite"/>
    </source>
</evidence>
<comment type="function">
    <text evidence="1">Specifically methylates the N4 position of cytidine in position 1402 (C1402) of 16S rRNA.</text>
</comment>
<comment type="catalytic activity">
    <reaction evidence="1">
        <text>cytidine(1402) in 16S rRNA + S-adenosyl-L-methionine = N(4)-methylcytidine(1402) in 16S rRNA + S-adenosyl-L-homocysteine + H(+)</text>
        <dbReference type="Rhea" id="RHEA:42928"/>
        <dbReference type="Rhea" id="RHEA-COMP:10286"/>
        <dbReference type="Rhea" id="RHEA-COMP:10287"/>
        <dbReference type="ChEBI" id="CHEBI:15378"/>
        <dbReference type="ChEBI" id="CHEBI:57856"/>
        <dbReference type="ChEBI" id="CHEBI:59789"/>
        <dbReference type="ChEBI" id="CHEBI:74506"/>
        <dbReference type="ChEBI" id="CHEBI:82748"/>
        <dbReference type="EC" id="2.1.1.199"/>
    </reaction>
</comment>
<comment type="subcellular location">
    <subcellularLocation>
        <location evidence="1">Cytoplasm</location>
    </subcellularLocation>
</comment>
<comment type="similarity">
    <text evidence="1">Belongs to the methyltransferase superfamily. RsmH family.</text>
</comment>
<name>RSMH_BACVZ</name>
<organism>
    <name type="scientific">Bacillus velezensis (strain DSM 23117 / BGSC 10A6 / LMG 26770 / FZB42)</name>
    <name type="common">Bacillus amyloliquefaciens subsp. plantarum</name>
    <dbReference type="NCBI Taxonomy" id="326423"/>
    <lineage>
        <taxon>Bacteria</taxon>
        <taxon>Bacillati</taxon>
        <taxon>Bacillota</taxon>
        <taxon>Bacilli</taxon>
        <taxon>Bacillales</taxon>
        <taxon>Bacillaceae</taxon>
        <taxon>Bacillus</taxon>
        <taxon>Bacillus amyloliquefaciens group</taxon>
    </lineage>
</organism>
<accession>A7Z4D7</accession>
<dbReference type="EC" id="2.1.1.199" evidence="1"/>
<dbReference type="EMBL" id="CP000560">
    <property type="protein sequence ID" value="ABS73863.1"/>
    <property type="molecule type" value="Genomic_DNA"/>
</dbReference>
<dbReference type="RefSeq" id="WP_012117500.1">
    <property type="nucleotide sequence ID" value="NC_009725.2"/>
</dbReference>
<dbReference type="SMR" id="A7Z4D7"/>
<dbReference type="GeneID" id="93080633"/>
<dbReference type="KEGG" id="bay:RBAM_015000"/>
<dbReference type="HOGENOM" id="CLU_038422_2_0_9"/>
<dbReference type="Proteomes" id="UP000001120">
    <property type="component" value="Chromosome"/>
</dbReference>
<dbReference type="GO" id="GO:0005737">
    <property type="term" value="C:cytoplasm"/>
    <property type="evidence" value="ECO:0007669"/>
    <property type="project" value="UniProtKB-SubCell"/>
</dbReference>
<dbReference type="GO" id="GO:0071424">
    <property type="term" value="F:rRNA (cytosine-N4-)-methyltransferase activity"/>
    <property type="evidence" value="ECO:0007669"/>
    <property type="project" value="UniProtKB-UniRule"/>
</dbReference>
<dbReference type="GO" id="GO:0070475">
    <property type="term" value="P:rRNA base methylation"/>
    <property type="evidence" value="ECO:0007669"/>
    <property type="project" value="UniProtKB-UniRule"/>
</dbReference>
<dbReference type="FunFam" id="1.10.150.170:FF:000001">
    <property type="entry name" value="Ribosomal RNA small subunit methyltransferase H"/>
    <property type="match status" value="1"/>
</dbReference>
<dbReference type="Gene3D" id="1.10.150.170">
    <property type="entry name" value="Putative methyltransferase TM0872, insert domain"/>
    <property type="match status" value="1"/>
</dbReference>
<dbReference type="Gene3D" id="3.40.50.150">
    <property type="entry name" value="Vaccinia Virus protein VP39"/>
    <property type="match status" value="1"/>
</dbReference>
<dbReference type="HAMAP" id="MF_01007">
    <property type="entry name" value="16SrRNA_methyltr_H"/>
    <property type="match status" value="1"/>
</dbReference>
<dbReference type="InterPro" id="IPR002903">
    <property type="entry name" value="RsmH"/>
</dbReference>
<dbReference type="InterPro" id="IPR023397">
    <property type="entry name" value="SAM-dep_MeTrfase_MraW_recog"/>
</dbReference>
<dbReference type="InterPro" id="IPR029063">
    <property type="entry name" value="SAM-dependent_MTases_sf"/>
</dbReference>
<dbReference type="NCBIfam" id="TIGR00006">
    <property type="entry name" value="16S rRNA (cytosine(1402)-N(4))-methyltransferase RsmH"/>
    <property type="match status" value="1"/>
</dbReference>
<dbReference type="PANTHER" id="PTHR11265:SF0">
    <property type="entry name" value="12S RRNA N4-METHYLCYTIDINE METHYLTRANSFERASE"/>
    <property type="match status" value="1"/>
</dbReference>
<dbReference type="PANTHER" id="PTHR11265">
    <property type="entry name" value="S-ADENOSYL-METHYLTRANSFERASE MRAW"/>
    <property type="match status" value="1"/>
</dbReference>
<dbReference type="Pfam" id="PF01795">
    <property type="entry name" value="Methyltransf_5"/>
    <property type="match status" value="1"/>
</dbReference>
<dbReference type="PIRSF" id="PIRSF004486">
    <property type="entry name" value="MraW"/>
    <property type="match status" value="1"/>
</dbReference>
<dbReference type="SUPFAM" id="SSF81799">
    <property type="entry name" value="Putative methyltransferase TM0872, insert domain"/>
    <property type="match status" value="1"/>
</dbReference>
<dbReference type="SUPFAM" id="SSF53335">
    <property type="entry name" value="S-adenosyl-L-methionine-dependent methyltransferases"/>
    <property type="match status" value="1"/>
</dbReference>
<protein>
    <recommendedName>
        <fullName evidence="1">Ribosomal RNA small subunit methyltransferase H</fullName>
        <ecNumber evidence="1">2.1.1.199</ecNumber>
    </recommendedName>
    <alternativeName>
        <fullName evidence="1">16S rRNA m(4)C1402 methyltransferase</fullName>
    </alternativeName>
    <alternativeName>
        <fullName evidence="1">rRNA (cytosine-N(4)-)-methyltransferase RsmH</fullName>
    </alternativeName>
</protein>
<feature type="chain" id="PRO_0000386725" description="Ribosomal RNA small subunit methyltransferase H">
    <location>
        <begin position="1"/>
        <end position="311"/>
    </location>
</feature>
<feature type="region of interest" description="Disordered" evidence="2">
    <location>
        <begin position="289"/>
        <end position="311"/>
    </location>
</feature>
<feature type="compositionally biased region" description="Basic and acidic residues" evidence="2">
    <location>
        <begin position="289"/>
        <end position="298"/>
    </location>
</feature>
<feature type="compositionally biased region" description="Basic residues" evidence="2">
    <location>
        <begin position="300"/>
        <end position="311"/>
    </location>
</feature>
<feature type="binding site" evidence="1">
    <location>
        <begin position="32"/>
        <end position="34"/>
    </location>
    <ligand>
        <name>S-adenosyl-L-methionine</name>
        <dbReference type="ChEBI" id="CHEBI:59789"/>
    </ligand>
</feature>
<feature type="binding site" evidence="1">
    <location>
        <position position="52"/>
    </location>
    <ligand>
        <name>S-adenosyl-L-methionine</name>
        <dbReference type="ChEBI" id="CHEBI:59789"/>
    </ligand>
</feature>
<feature type="binding site" evidence="1">
    <location>
        <position position="79"/>
    </location>
    <ligand>
        <name>S-adenosyl-L-methionine</name>
        <dbReference type="ChEBI" id="CHEBI:59789"/>
    </ligand>
</feature>
<feature type="binding site" evidence="1">
    <location>
        <position position="100"/>
    </location>
    <ligand>
        <name>S-adenosyl-L-methionine</name>
        <dbReference type="ChEBI" id="CHEBI:59789"/>
    </ligand>
</feature>
<feature type="binding site" evidence="1">
    <location>
        <position position="107"/>
    </location>
    <ligand>
        <name>S-adenosyl-L-methionine</name>
        <dbReference type="ChEBI" id="CHEBI:59789"/>
    </ligand>
</feature>
<sequence>MFQHKTVLLRETVDGLNIKPDGTYVDCTLGGAGHSTYLLQQLSEKGRLIAFDQDDTALENAKKTLSEYKGQLILVKSNFRYLKECLHEHGITSVDGILFDLGVSSPQLDTPERGFSYHHDAPLDMRMDQSAALTAKEVVNEWRYEDLVRIFFKYGEEKFSKQIARKIEEAREKSPIQTTGQLVDLIKDAIPAPARRSGGHPAKRVFQAIRIAVNDELQVFEEALLQAIEVLKPGGRVSVITFHSLEDRMCKMTFKEKSSLPELPPGLPVIPEEFEPELKLITRKPITASKEELEENNRARSAKLRIAEKRK</sequence>
<gene>
    <name evidence="1" type="primary">rsmH</name>
    <name type="synonym">mraW</name>
    <name type="ordered locus">RBAM_015000</name>
</gene>
<proteinExistence type="inferred from homology"/>
<keyword id="KW-0963">Cytoplasm</keyword>
<keyword id="KW-0489">Methyltransferase</keyword>
<keyword id="KW-0698">rRNA processing</keyword>
<keyword id="KW-0949">S-adenosyl-L-methionine</keyword>
<keyword id="KW-0808">Transferase</keyword>
<reference key="1">
    <citation type="journal article" date="2007" name="Nat. Biotechnol.">
        <title>Comparative analysis of the complete genome sequence of the plant growth-promoting bacterium Bacillus amyloliquefaciens FZB42.</title>
        <authorList>
            <person name="Chen X.H."/>
            <person name="Koumoutsi A."/>
            <person name="Scholz R."/>
            <person name="Eisenreich A."/>
            <person name="Schneider K."/>
            <person name="Heinemeyer I."/>
            <person name="Morgenstern B."/>
            <person name="Voss B."/>
            <person name="Hess W.R."/>
            <person name="Reva O."/>
            <person name="Junge H."/>
            <person name="Voigt B."/>
            <person name="Jungblut P.R."/>
            <person name="Vater J."/>
            <person name="Suessmuth R."/>
            <person name="Liesegang H."/>
            <person name="Strittmatter A."/>
            <person name="Gottschalk G."/>
            <person name="Borriss R."/>
        </authorList>
    </citation>
    <scope>NUCLEOTIDE SEQUENCE [LARGE SCALE GENOMIC DNA]</scope>
    <source>
        <strain>DSM 23117 / BGSC 10A6 / LMG 26770 / FZB42</strain>
    </source>
</reference>